<accession>O74396</accession>
<accession>A0AAN2H6D9</accession>
<accession>D2CFN6</accession>
<feature type="chain" id="PRO_0000316571" description="Vacuolar protein sorting-associated protein vps901">
    <location>
        <begin position="1"/>
        <end position="572"/>
    </location>
</feature>
<feature type="domain" description="VPS9" evidence="3">
    <location>
        <begin position="219"/>
        <end position="357"/>
    </location>
</feature>
<feature type="domain" description="CUE" evidence="2">
    <location>
        <begin position="529"/>
        <end position="571"/>
    </location>
</feature>
<feature type="region of interest" description="Disordered" evidence="4">
    <location>
        <begin position="1"/>
        <end position="108"/>
    </location>
</feature>
<feature type="region of interest" description="Disordered" evidence="4">
    <location>
        <begin position="430"/>
        <end position="502"/>
    </location>
</feature>
<feature type="compositionally biased region" description="Basic and acidic residues" evidence="4">
    <location>
        <begin position="1"/>
        <end position="31"/>
    </location>
</feature>
<feature type="compositionally biased region" description="Basic and acidic residues" evidence="4">
    <location>
        <begin position="39"/>
        <end position="53"/>
    </location>
</feature>
<feature type="compositionally biased region" description="Polar residues" evidence="4">
    <location>
        <begin position="69"/>
        <end position="80"/>
    </location>
</feature>
<feature type="compositionally biased region" description="Basic and acidic residues" evidence="4">
    <location>
        <begin position="82"/>
        <end position="98"/>
    </location>
</feature>
<feature type="compositionally biased region" description="Polar residues" evidence="4">
    <location>
        <begin position="445"/>
        <end position="457"/>
    </location>
</feature>
<feature type="mutagenesis site" description="Causes a defect of Cpy1 secretion." evidence="5">
    <original>D</original>
    <variation>A</variation>
    <location>
        <position position="296"/>
    </location>
</feature>
<feature type="sequence conflict" description="In Ref. 1; ABG66956." evidence="6" ref="1">
    <original>G</original>
    <variation>A</variation>
    <location>
        <position position="447"/>
    </location>
</feature>
<proteinExistence type="evidence at protein level"/>
<sequence length="572" mass="65540">MDYPSFHEDPTKDESTVAEQRKGQSNEEKPLIDLNDSLDEQRNAYNEHCKNHDQQPSQQVRNMEDEANQYEQTDSSSDQEVMNEKQSLDKENRNDNIPHENNPGQQEINEPIFDFHMFLEQLRSSSAEPVAKYLKSFLSEFTKRRWTVNYQVKLIRDFLKFINEKIEQYEPWASGSQAEIDNAKEGMEKLVLNRLYTSLFSPEIAKSGIPLSSEHSDDVEEDRVLSEKMELFQWITEENLDIKKQKSSSKFFKLAADELRRINDYHAPRDKIICLLNCCKVIFSYLRNVVKEESADMFVPILIFVVLQARPAHLVSNIQYIQRFRSPEKLTGEVMYYLSTLMGAMSFIETLDCSSLTITEEEFNAQIEKSIKKMEERKLSEKSESKTAVNENATYKDPVLSRGLSSSIDVSTGVALVNLPEELENMKYLQIDTPESKEYPRSTRPRGSSHSGSFTTDSGKRSRRNSNKYVGSSDRPPYRVSRAYSSSATHSPIVHEEQPVDDGLQQNDDLREATTASLETAEAERLQAREKAEAITALRAMFPAFDSEVIEVVLNAQQGRLSSSIDSLLEMS</sequence>
<dbReference type="EMBL" id="DQ665299">
    <property type="protein sequence ID" value="ABG66956.1"/>
    <property type="molecule type" value="mRNA"/>
</dbReference>
<dbReference type="EMBL" id="CU329671">
    <property type="protein sequence ID" value="CAK9840417.1"/>
    <property type="molecule type" value="Genomic_DNA"/>
</dbReference>
<dbReference type="PIR" id="T40507">
    <property type="entry name" value="T40507"/>
</dbReference>
<dbReference type="RefSeq" id="NP_596110.2">
    <property type="nucleotide sequence ID" value="NM_001022027.2"/>
</dbReference>
<dbReference type="SMR" id="O74396"/>
<dbReference type="FunCoup" id="O74396">
    <property type="interactions" value="69"/>
</dbReference>
<dbReference type="STRING" id="284812.O74396"/>
<dbReference type="iPTMnet" id="O74396"/>
<dbReference type="PaxDb" id="4896-SPBC4F6.10.1"/>
<dbReference type="GeneID" id="2540886"/>
<dbReference type="KEGG" id="spo:2540886"/>
<dbReference type="PomBase" id="SPBC4F6.10">
    <property type="gene designation" value="vps901"/>
</dbReference>
<dbReference type="eggNOG" id="KOG2319">
    <property type="taxonomic scope" value="Eukaryota"/>
</dbReference>
<dbReference type="HOGENOM" id="CLU_007625_3_3_1"/>
<dbReference type="InParanoid" id="O74396"/>
<dbReference type="Reactome" id="R-SPO-8876198">
    <property type="pathway name" value="RAB GEFs exchange GTP for GDP on RABs"/>
</dbReference>
<dbReference type="PRO" id="PR:O74396"/>
<dbReference type="Proteomes" id="UP000002485">
    <property type="component" value="Chromosome II"/>
</dbReference>
<dbReference type="GO" id="GO:0005829">
    <property type="term" value="C:cytosol"/>
    <property type="evidence" value="ECO:0000318"/>
    <property type="project" value="GO_Central"/>
</dbReference>
<dbReference type="GO" id="GO:0030139">
    <property type="term" value="C:endocytic vesicle"/>
    <property type="evidence" value="ECO:0000318"/>
    <property type="project" value="GO_Central"/>
</dbReference>
<dbReference type="GO" id="GO:0005085">
    <property type="term" value="F:guanyl-nucleotide exchange factor activity"/>
    <property type="evidence" value="ECO:0007669"/>
    <property type="project" value="InterPro"/>
</dbReference>
<dbReference type="GO" id="GO:0031267">
    <property type="term" value="F:small GTPase binding"/>
    <property type="evidence" value="ECO:0000318"/>
    <property type="project" value="GO_Central"/>
</dbReference>
<dbReference type="GO" id="GO:0043130">
    <property type="term" value="F:ubiquitin binding"/>
    <property type="evidence" value="ECO:0007669"/>
    <property type="project" value="InterPro"/>
</dbReference>
<dbReference type="GO" id="GO:0016192">
    <property type="term" value="P:vesicle-mediated transport"/>
    <property type="evidence" value="ECO:0007669"/>
    <property type="project" value="InterPro"/>
</dbReference>
<dbReference type="FunFam" id="1.10.246.120:FF:000004">
    <property type="entry name" value="Vacuolar sorting protein"/>
    <property type="match status" value="1"/>
</dbReference>
<dbReference type="Gene3D" id="1.10.246.120">
    <property type="match status" value="1"/>
</dbReference>
<dbReference type="Gene3D" id="1.10.8.10">
    <property type="entry name" value="DNA helicase RuvA subunit, C-terminal domain"/>
    <property type="match status" value="1"/>
</dbReference>
<dbReference type="Gene3D" id="1.20.1050.80">
    <property type="entry name" value="VPS9 domain"/>
    <property type="match status" value="1"/>
</dbReference>
<dbReference type="InterPro" id="IPR003892">
    <property type="entry name" value="CUE"/>
</dbReference>
<dbReference type="InterPro" id="IPR041545">
    <property type="entry name" value="DUF5601"/>
</dbReference>
<dbReference type="InterPro" id="IPR009060">
    <property type="entry name" value="UBA-like_sf"/>
</dbReference>
<dbReference type="InterPro" id="IPR003123">
    <property type="entry name" value="VPS9"/>
</dbReference>
<dbReference type="InterPro" id="IPR045046">
    <property type="entry name" value="Vps9-like"/>
</dbReference>
<dbReference type="InterPro" id="IPR037191">
    <property type="entry name" value="VPS9_dom_sf"/>
</dbReference>
<dbReference type="PANTHER" id="PTHR23101:SF25">
    <property type="entry name" value="GTPASE-ACTIVATING PROTEIN AND VPS9 DOMAIN-CONTAINING PROTEIN 1"/>
    <property type="match status" value="1"/>
</dbReference>
<dbReference type="PANTHER" id="PTHR23101">
    <property type="entry name" value="RAB GDP/GTP EXCHANGE FACTOR"/>
    <property type="match status" value="1"/>
</dbReference>
<dbReference type="Pfam" id="PF02845">
    <property type="entry name" value="CUE"/>
    <property type="match status" value="1"/>
</dbReference>
<dbReference type="Pfam" id="PF18151">
    <property type="entry name" value="DUF5601"/>
    <property type="match status" value="1"/>
</dbReference>
<dbReference type="Pfam" id="PF02204">
    <property type="entry name" value="VPS9"/>
    <property type="match status" value="1"/>
</dbReference>
<dbReference type="SMART" id="SM00546">
    <property type="entry name" value="CUE"/>
    <property type="match status" value="1"/>
</dbReference>
<dbReference type="SMART" id="SM00167">
    <property type="entry name" value="VPS9"/>
    <property type="match status" value="1"/>
</dbReference>
<dbReference type="SUPFAM" id="SSF46934">
    <property type="entry name" value="UBA-like"/>
    <property type="match status" value="1"/>
</dbReference>
<dbReference type="SUPFAM" id="SSF109993">
    <property type="entry name" value="VPS9 domain"/>
    <property type="match status" value="1"/>
</dbReference>
<dbReference type="PROSITE" id="PS51140">
    <property type="entry name" value="CUE"/>
    <property type="match status" value="1"/>
</dbReference>
<dbReference type="PROSITE" id="PS51205">
    <property type="entry name" value="VPS9"/>
    <property type="match status" value="1"/>
</dbReference>
<evidence type="ECO:0000250" key="1"/>
<evidence type="ECO:0000255" key="2">
    <source>
        <dbReference type="PROSITE-ProRule" id="PRU00468"/>
    </source>
</evidence>
<evidence type="ECO:0000255" key="3">
    <source>
        <dbReference type="PROSITE-ProRule" id="PRU00550"/>
    </source>
</evidence>
<evidence type="ECO:0000256" key="4">
    <source>
        <dbReference type="SAM" id="MobiDB-lite"/>
    </source>
</evidence>
<evidence type="ECO:0000269" key="5">
    <source>
    </source>
</evidence>
<evidence type="ECO:0000305" key="6"/>
<evidence type="ECO:0000312" key="7">
    <source>
        <dbReference type="PomBase" id="SPBC4F6.10"/>
    </source>
</evidence>
<organism>
    <name type="scientific">Schizosaccharomyces pombe (strain 972 / ATCC 24843)</name>
    <name type="common">Fission yeast</name>
    <dbReference type="NCBI Taxonomy" id="284812"/>
    <lineage>
        <taxon>Eukaryota</taxon>
        <taxon>Fungi</taxon>
        <taxon>Dikarya</taxon>
        <taxon>Ascomycota</taxon>
        <taxon>Taphrinomycotina</taxon>
        <taxon>Schizosaccharomycetes</taxon>
        <taxon>Schizosaccharomycetales</taxon>
        <taxon>Schizosaccharomycetaceae</taxon>
        <taxon>Schizosaccharomyces</taxon>
    </lineage>
</organism>
<comment type="function">
    <text evidence="5">Required for vacuolar protein sorting; may be required for the consumption of transport vesicles containing vacuolar protein precursors. Required for vacuolar fusion.</text>
</comment>
<comment type="domain">
    <text evidence="1">The CUE domain (Coupling of ubiquitin conjugation to ER degradation) is monoubiquitin-binding and is required for intramolecular ubiquitination.</text>
</comment>
<comment type="disruption phenotype">
    <text evidence="5">Results in mis-sorting and secretion of vacuolar carboxypeptidase Cpy1.</text>
</comment>
<name>VPS91_SCHPO</name>
<gene>
    <name type="primary">vps901</name>
    <name type="synonym">vps9a</name>
    <name evidence="7" type="ORF">SPBC4F6.10</name>
</gene>
<reference key="1">
    <citation type="journal article" date="2012" name="Biosci. Biotechnol. Biochem.">
        <title>CUE domain-containing protein Vps901 is required for vacuolar protein transport in Schizosaccharomyces pombe.</title>
        <authorList>
            <person name="Nakase M."/>
            <person name="Tsukamoto Y."/>
            <person name="Hosomi A."/>
            <person name="Matsuda T."/>
            <person name="Miyamoto M."/>
            <person name="Takegawa K."/>
        </authorList>
    </citation>
    <scope>NUCLEOTIDE SEQUENCE [MRNA]</scope>
    <scope>FUNCTION</scope>
    <scope>DISRUPTION PHENOTYPE</scope>
    <scope>MUTAGENESIS OF ASP-296</scope>
</reference>
<reference key="2">
    <citation type="journal article" date="2002" name="Nature">
        <title>The genome sequence of Schizosaccharomyces pombe.</title>
        <authorList>
            <person name="Wood V."/>
            <person name="Gwilliam R."/>
            <person name="Rajandream M.A."/>
            <person name="Lyne M.H."/>
            <person name="Lyne R."/>
            <person name="Stewart A."/>
            <person name="Sgouros J.G."/>
            <person name="Peat N."/>
            <person name="Hayles J."/>
            <person name="Baker S.G."/>
            <person name="Basham D."/>
            <person name="Bowman S."/>
            <person name="Brooks K."/>
            <person name="Brown D."/>
            <person name="Brown S."/>
            <person name="Chillingworth T."/>
            <person name="Churcher C.M."/>
            <person name="Collins M."/>
            <person name="Connor R."/>
            <person name="Cronin A."/>
            <person name="Davis P."/>
            <person name="Feltwell T."/>
            <person name="Fraser A."/>
            <person name="Gentles S."/>
            <person name="Goble A."/>
            <person name="Hamlin N."/>
            <person name="Harris D.E."/>
            <person name="Hidalgo J."/>
            <person name="Hodgson G."/>
            <person name="Holroyd S."/>
            <person name="Hornsby T."/>
            <person name="Howarth S."/>
            <person name="Huckle E.J."/>
            <person name="Hunt S."/>
            <person name="Jagels K."/>
            <person name="James K.D."/>
            <person name="Jones L."/>
            <person name="Jones M."/>
            <person name="Leather S."/>
            <person name="McDonald S."/>
            <person name="McLean J."/>
            <person name="Mooney P."/>
            <person name="Moule S."/>
            <person name="Mungall K.L."/>
            <person name="Murphy L.D."/>
            <person name="Niblett D."/>
            <person name="Odell C."/>
            <person name="Oliver K."/>
            <person name="O'Neil S."/>
            <person name="Pearson D."/>
            <person name="Quail M.A."/>
            <person name="Rabbinowitsch E."/>
            <person name="Rutherford K.M."/>
            <person name="Rutter S."/>
            <person name="Saunders D."/>
            <person name="Seeger K."/>
            <person name="Sharp S."/>
            <person name="Skelton J."/>
            <person name="Simmonds M.N."/>
            <person name="Squares R."/>
            <person name="Squares S."/>
            <person name="Stevens K."/>
            <person name="Taylor K."/>
            <person name="Taylor R.G."/>
            <person name="Tivey A."/>
            <person name="Walsh S.V."/>
            <person name="Warren T."/>
            <person name="Whitehead S."/>
            <person name="Woodward J.R."/>
            <person name="Volckaert G."/>
            <person name="Aert R."/>
            <person name="Robben J."/>
            <person name="Grymonprez B."/>
            <person name="Weltjens I."/>
            <person name="Vanstreels E."/>
            <person name="Rieger M."/>
            <person name="Schaefer M."/>
            <person name="Mueller-Auer S."/>
            <person name="Gabel C."/>
            <person name="Fuchs M."/>
            <person name="Duesterhoeft A."/>
            <person name="Fritzc C."/>
            <person name="Holzer E."/>
            <person name="Moestl D."/>
            <person name="Hilbert H."/>
            <person name="Borzym K."/>
            <person name="Langer I."/>
            <person name="Beck A."/>
            <person name="Lehrach H."/>
            <person name="Reinhardt R."/>
            <person name="Pohl T.M."/>
            <person name="Eger P."/>
            <person name="Zimmermann W."/>
            <person name="Wedler H."/>
            <person name="Wambutt R."/>
            <person name="Purnelle B."/>
            <person name="Goffeau A."/>
            <person name="Cadieu E."/>
            <person name="Dreano S."/>
            <person name="Gloux S."/>
            <person name="Lelaure V."/>
            <person name="Mottier S."/>
            <person name="Galibert F."/>
            <person name="Aves S.J."/>
            <person name="Xiang Z."/>
            <person name="Hunt C."/>
            <person name="Moore K."/>
            <person name="Hurst S.M."/>
            <person name="Lucas M."/>
            <person name="Rochet M."/>
            <person name="Gaillardin C."/>
            <person name="Tallada V.A."/>
            <person name="Garzon A."/>
            <person name="Thode G."/>
            <person name="Daga R.R."/>
            <person name="Cruzado L."/>
            <person name="Jimenez J."/>
            <person name="Sanchez M."/>
            <person name="del Rey F."/>
            <person name="Benito J."/>
            <person name="Dominguez A."/>
            <person name="Revuelta J.L."/>
            <person name="Moreno S."/>
            <person name="Armstrong J."/>
            <person name="Forsburg S.L."/>
            <person name="Cerutti L."/>
            <person name="Lowe T."/>
            <person name="McCombie W.R."/>
            <person name="Paulsen I."/>
            <person name="Potashkin J."/>
            <person name="Shpakovski G.V."/>
            <person name="Ussery D."/>
            <person name="Barrell B.G."/>
            <person name="Nurse P."/>
        </authorList>
    </citation>
    <scope>NUCLEOTIDE SEQUENCE [LARGE SCALE GENOMIC DNA]</scope>
    <source>
        <strain>972 / ATCC 24843</strain>
    </source>
</reference>
<reference key="3">
    <citation type="journal article" date="2006" name="Nat. Biotechnol.">
        <title>ORFeome cloning and global analysis of protein localization in the fission yeast Schizosaccharomyces pombe.</title>
        <authorList>
            <person name="Matsuyama A."/>
            <person name="Arai R."/>
            <person name="Yashiroda Y."/>
            <person name="Shirai A."/>
            <person name="Kamata A."/>
            <person name="Sekido S."/>
            <person name="Kobayashi Y."/>
            <person name="Hashimoto A."/>
            <person name="Hamamoto M."/>
            <person name="Hiraoka Y."/>
            <person name="Horinouchi S."/>
            <person name="Yoshida M."/>
        </authorList>
    </citation>
    <scope>IDENTIFICATION OF FRAMESHIFT</scope>
    <source>
        <strain>972 / ATCC 24843</strain>
        <strain>JY3</strain>
    </source>
</reference>
<reference key="4">
    <citation type="journal article" date="2011" name="Genetics">
        <title>Augmented annotation of the Schizosaccharomyces pombe genome reveals additional genes required for growth and viability.</title>
        <authorList>
            <person name="Bitton D.A."/>
            <person name="Wood V."/>
            <person name="Scutt P.J."/>
            <person name="Grallert A."/>
            <person name="Yates T."/>
            <person name="Smith D.L."/>
            <person name="Hagan I.M."/>
            <person name="Miller C.J."/>
        </authorList>
    </citation>
    <scope>REVISION OF GENE MODEL</scope>
    <scope>IDENTIFICATION BY MASS SPECTROMETRY</scope>
</reference>
<keyword id="KW-1185">Reference proteome</keyword>
<keyword id="KW-0833">Ubl conjugation pathway</keyword>
<protein>
    <recommendedName>
        <fullName>Vacuolar protein sorting-associated protein vps901</fullName>
    </recommendedName>
    <alternativeName>
        <fullName>Vacuolar protein-targeting protein 9a</fullName>
    </alternativeName>
</protein>